<organism>
    <name type="scientific">Francisella tularensis subsp. tularensis (strain SCHU S4 / Schu 4)</name>
    <dbReference type="NCBI Taxonomy" id="177416"/>
    <lineage>
        <taxon>Bacteria</taxon>
        <taxon>Pseudomonadati</taxon>
        <taxon>Pseudomonadota</taxon>
        <taxon>Gammaproteobacteria</taxon>
        <taxon>Thiotrichales</taxon>
        <taxon>Francisellaceae</taxon>
        <taxon>Francisella</taxon>
    </lineage>
</organism>
<accession>Q5NGH1</accession>
<gene>
    <name evidence="1" type="primary">gpsA</name>
    <name type="ordered locus">FTT_0871</name>
</gene>
<comment type="function">
    <text evidence="1">Catalyzes the reduction of the glycolytic intermediate dihydroxyacetone phosphate (DHAP) to sn-glycerol 3-phosphate (G3P), the key precursor for phospholipid synthesis.</text>
</comment>
<comment type="catalytic activity">
    <reaction evidence="1">
        <text>sn-glycerol 3-phosphate + NAD(+) = dihydroxyacetone phosphate + NADH + H(+)</text>
        <dbReference type="Rhea" id="RHEA:11092"/>
        <dbReference type="ChEBI" id="CHEBI:15378"/>
        <dbReference type="ChEBI" id="CHEBI:57540"/>
        <dbReference type="ChEBI" id="CHEBI:57597"/>
        <dbReference type="ChEBI" id="CHEBI:57642"/>
        <dbReference type="ChEBI" id="CHEBI:57945"/>
        <dbReference type="EC" id="1.1.1.94"/>
    </reaction>
    <physiologicalReaction direction="right-to-left" evidence="1">
        <dbReference type="Rhea" id="RHEA:11094"/>
    </physiologicalReaction>
</comment>
<comment type="catalytic activity">
    <reaction evidence="1">
        <text>sn-glycerol 3-phosphate + NADP(+) = dihydroxyacetone phosphate + NADPH + H(+)</text>
        <dbReference type="Rhea" id="RHEA:11096"/>
        <dbReference type="ChEBI" id="CHEBI:15378"/>
        <dbReference type="ChEBI" id="CHEBI:57597"/>
        <dbReference type="ChEBI" id="CHEBI:57642"/>
        <dbReference type="ChEBI" id="CHEBI:57783"/>
        <dbReference type="ChEBI" id="CHEBI:58349"/>
        <dbReference type="EC" id="1.1.1.94"/>
    </reaction>
    <physiologicalReaction direction="right-to-left" evidence="1">
        <dbReference type="Rhea" id="RHEA:11098"/>
    </physiologicalReaction>
</comment>
<comment type="pathway">
    <text evidence="1">Membrane lipid metabolism; glycerophospholipid metabolism.</text>
</comment>
<comment type="subcellular location">
    <subcellularLocation>
        <location evidence="1">Cytoplasm</location>
    </subcellularLocation>
</comment>
<comment type="similarity">
    <text evidence="1">Belongs to the NAD-dependent glycerol-3-phosphate dehydrogenase family.</text>
</comment>
<evidence type="ECO:0000255" key="1">
    <source>
        <dbReference type="HAMAP-Rule" id="MF_00394"/>
    </source>
</evidence>
<keyword id="KW-0963">Cytoplasm</keyword>
<keyword id="KW-0444">Lipid biosynthesis</keyword>
<keyword id="KW-0443">Lipid metabolism</keyword>
<keyword id="KW-0520">NAD</keyword>
<keyword id="KW-0521">NADP</keyword>
<keyword id="KW-0547">Nucleotide-binding</keyword>
<keyword id="KW-0560">Oxidoreductase</keyword>
<keyword id="KW-0594">Phospholipid biosynthesis</keyword>
<keyword id="KW-1208">Phospholipid metabolism</keyword>
<keyword id="KW-1185">Reference proteome</keyword>
<reference key="1">
    <citation type="journal article" date="2005" name="Nat. Genet.">
        <title>The complete genome sequence of Francisella tularensis, the causative agent of tularemia.</title>
        <authorList>
            <person name="Larsson P."/>
            <person name="Oyston P.C.F."/>
            <person name="Chain P."/>
            <person name="Chu M.C."/>
            <person name="Duffield M."/>
            <person name="Fuxelius H.-H."/>
            <person name="Garcia E."/>
            <person name="Haelltorp G."/>
            <person name="Johansson D."/>
            <person name="Isherwood K.E."/>
            <person name="Karp P.D."/>
            <person name="Larsson E."/>
            <person name="Liu Y."/>
            <person name="Michell S."/>
            <person name="Prior J."/>
            <person name="Prior R."/>
            <person name="Malfatti S."/>
            <person name="Sjoestedt A."/>
            <person name="Svensson K."/>
            <person name="Thompson N."/>
            <person name="Vergez L."/>
            <person name="Wagg J.K."/>
            <person name="Wren B.W."/>
            <person name="Lindler L.E."/>
            <person name="Andersson S.G.E."/>
            <person name="Forsman M."/>
            <person name="Titball R.W."/>
        </authorList>
    </citation>
    <scope>NUCLEOTIDE SEQUENCE [LARGE SCALE GENOMIC DNA]</scope>
    <source>
        <strain>SCHU S4 / Schu 4</strain>
    </source>
</reference>
<sequence length="332" mass="36643">MQKNILVLGAGAWGTALALQLAYRGHNVRINSWKAEHNEQMLKDNNNHKYLPSIEKFPSRLKAIQDWQANIIEFDSILVATPSSGFKNTILELKECILPQQNIISATKGFCHDSYALLSEIAEDILPTTKFALLTGPSFAKELANQLPTAVVVASKDINYARYVQELFSNENFRCYTTTDIIGAQVGGAVKNVLAITAGIAAGMEFGVNAHAALITRGLAEIKKLGLKLGANSETFIGLSCLGDLLLTCSDNQSRNRRFGLYLGQGMTIQQALKEVNNVVEGYFTAKAVYNLAKKHNVEMPLVFATYRILYEAADPRDIVKELMTRQLKNEN</sequence>
<feature type="chain" id="PRO_0000137963" description="Glycerol-3-phosphate dehydrogenase [NAD(P)+]">
    <location>
        <begin position="1"/>
        <end position="332"/>
    </location>
</feature>
<feature type="active site" description="Proton acceptor" evidence="1">
    <location>
        <position position="191"/>
    </location>
</feature>
<feature type="binding site" evidence="1">
    <location>
        <position position="13"/>
    </location>
    <ligand>
        <name>NADPH</name>
        <dbReference type="ChEBI" id="CHEBI:57783"/>
    </ligand>
</feature>
<feature type="binding site" evidence="1">
    <location>
        <position position="34"/>
    </location>
    <ligand>
        <name>NADPH</name>
        <dbReference type="ChEBI" id="CHEBI:57783"/>
    </ligand>
</feature>
<feature type="binding site" evidence="1">
    <location>
        <position position="108"/>
    </location>
    <ligand>
        <name>NADPH</name>
        <dbReference type="ChEBI" id="CHEBI:57783"/>
    </ligand>
</feature>
<feature type="binding site" evidence="1">
    <location>
        <position position="108"/>
    </location>
    <ligand>
        <name>sn-glycerol 3-phosphate</name>
        <dbReference type="ChEBI" id="CHEBI:57597"/>
    </ligand>
</feature>
<feature type="binding site" evidence="1">
    <location>
        <position position="136"/>
    </location>
    <ligand>
        <name>sn-glycerol 3-phosphate</name>
        <dbReference type="ChEBI" id="CHEBI:57597"/>
    </ligand>
</feature>
<feature type="binding site" evidence="1">
    <location>
        <position position="138"/>
    </location>
    <ligand>
        <name>sn-glycerol 3-phosphate</name>
        <dbReference type="ChEBI" id="CHEBI:57597"/>
    </ligand>
</feature>
<feature type="binding site" evidence="1">
    <location>
        <position position="140"/>
    </location>
    <ligand>
        <name>NADPH</name>
        <dbReference type="ChEBI" id="CHEBI:57783"/>
    </ligand>
</feature>
<feature type="binding site" evidence="1">
    <location>
        <position position="191"/>
    </location>
    <ligand>
        <name>sn-glycerol 3-phosphate</name>
        <dbReference type="ChEBI" id="CHEBI:57597"/>
    </ligand>
</feature>
<feature type="binding site" evidence="1">
    <location>
        <position position="244"/>
    </location>
    <ligand>
        <name>sn-glycerol 3-phosphate</name>
        <dbReference type="ChEBI" id="CHEBI:57597"/>
    </ligand>
</feature>
<feature type="binding site" evidence="1">
    <location>
        <position position="254"/>
    </location>
    <ligand>
        <name>sn-glycerol 3-phosphate</name>
        <dbReference type="ChEBI" id="CHEBI:57597"/>
    </ligand>
</feature>
<feature type="binding site" evidence="1">
    <location>
        <position position="255"/>
    </location>
    <ligand>
        <name>NADPH</name>
        <dbReference type="ChEBI" id="CHEBI:57783"/>
    </ligand>
</feature>
<feature type="binding site" evidence="1">
    <location>
        <position position="255"/>
    </location>
    <ligand>
        <name>sn-glycerol 3-phosphate</name>
        <dbReference type="ChEBI" id="CHEBI:57597"/>
    </ligand>
</feature>
<feature type="binding site" evidence="1">
    <location>
        <position position="256"/>
    </location>
    <ligand>
        <name>sn-glycerol 3-phosphate</name>
        <dbReference type="ChEBI" id="CHEBI:57597"/>
    </ligand>
</feature>
<feature type="binding site" evidence="1">
    <location>
        <position position="279"/>
    </location>
    <ligand>
        <name>NADPH</name>
        <dbReference type="ChEBI" id="CHEBI:57783"/>
    </ligand>
</feature>
<feature type="binding site" evidence="1">
    <location>
        <position position="281"/>
    </location>
    <ligand>
        <name>NADPH</name>
        <dbReference type="ChEBI" id="CHEBI:57783"/>
    </ligand>
</feature>
<protein>
    <recommendedName>
        <fullName evidence="1">Glycerol-3-phosphate dehydrogenase [NAD(P)+]</fullName>
        <ecNumber evidence="1">1.1.1.94</ecNumber>
    </recommendedName>
    <alternativeName>
        <fullName evidence="1">NAD(P)(+)-dependent glycerol-3-phosphate dehydrogenase</fullName>
    </alternativeName>
    <alternativeName>
        <fullName evidence="1">NAD(P)H-dependent dihydroxyacetone-phosphate reductase</fullName>
    </alternativeName>
</protein>
<dbReference type="EC" id="1.1.1.94" evidence="1"/>
<dbReference type="EMBL" id="AJ749949">
    <property type="protein sequence ID" value="CAG45504.1"/>
    <property type="molecule type" value="Genomic_DNA"/>
</dbReference>
<dbReference type="RefSeq" id="WP_003018393.1">
    <property type="nucleotide sequence ID" value="NZ_CP010290.1"/>
</dbReference>
<dbReference type="RefSeq" id="YP_169871.1">
    <property type="nucleotide sequence ID" value="NC_006570.2"/>
</dbReference>
<dbReference type="SMR" id="Q5NGH1"/>
<dbReference type="STRING" id="177416.FTT_0871"/>
<dbReference type="DNASU" id="3192551"/>
<dbReference type="EnsemblBacteria" id="CAG45504">
    <property type="protein sequence ID" value="CAG45504"/>
    <property type="gene ID" value="FTT_0871"/>
</dbReference>
<dbReference type="KEGG" id="ftu:FTT_0871"/>
<dbReference type="eggNOG" id="COG0240">
    <property type="taxonomic scope" value="Bacteria"/>
</dbReference>
<dbReference type="OrthoDB" id="9812273at2"/>
<dbReference type="UniPathway" id="UPA00940"/>
<dbReference type="Proteomes" id="UP000001174">
    <property type="component" value="Chromosome"/>
</dbReference>
<dbReference type="GO" id="GO:0005829">
    <property type="term" value="C:cytosol"/>
    <property type="evidence" value="ECO:0007669"/>
    <property type="project" value="TreeGrafter"/>
</dbReference>
<dbReference type="GO" id="GO:0047952">
    <property type="term" value="F:glycerol-3-phosphate dehydrogenase [NAD(P)+] activity"/>
    <property type="evidence" value="ECO:0007669"/>
    <property type="project" value="UniProtKB-UniRule"/>
</dbReference>
<dbReference type="GO" id="GO:0051287">
    <property type="term" value="F:NAD binding"/>
    <property type="evidence" value="ECO:0007669"/>
    <property type="project" value="InterPro"/>
</dbReference>
<dbReference type="GO" id="GO:0005975">
    <property type="term" value="P:carbohydrate metabolic process"/>
    <property type="evidence" value="ECO:0007669"/>
    <property type="project" value="InterPro"/>
</dbReference>
<dbReference type="GO" id="GO:0046167">
    <property type="term" value="P:glycerol-3-phosphate biosynthetic process"/>
    <property type="evidence" value="ECO:0007669"/>
    <property type="project" value="UniProtKB-UniRule"/>
</dbReference>
<dbReference type="GO" id="GO:0046168">
    <property type="term" value="P:glycerol-3-phosphate catabolic process"/>
    <property type="evidence" value="ECO:0007669"/>
    <property type="project" value="InterPro"/>
</dbReference>
<dbReference type="GO" id="GO:0046474">
    <property type="term" value="P:glycerophospholipid biosynthetic process"/>
    <property type="evidence" value="ECO:0007669"/>
    <property type="project" value="TreeGrafter"/>
</dbReference>
<dbReference type="FunFam" id="1.10.1040.10:FF:000001">
    <property type="entry name" value="Glycerol-3-phosphate dehydrogenase [NAD(P)+]"/>
    <property type="match status" value="1"/>
</dbReference>
<dbReference type="FunFam" id="3.40.50.720:FF:000019">
    <property type="entry name" value="Glycerol-3-phosphate dehydrogenase [NAD(P)+]"/>
    <property type="match status" value="1"/>
</dbReference>
<dbReference type="Gene3D" id="1.10.1040.10">
    <property type="entry name" value="N-(1-d-carboxylethyl)-l-norvaline Dehydrogenase, domain 2"/>
    <property type="match status" value="1"/>
</dbReference>
<dbReference type="Gene3D" id="3.40.50.720">
    <property type="entry name" value="NAD(P)-binding Rossmann-like Domain"/>
    <property type="match status" value="1"/>
</dbReference>
<dbReference type="HAMAP" id="MF_00394">
    <property type="entry name" value="NAD_Glyc3P_dehydrog"/>
    <property type="match status" value="1"/>
</dbReference>
<dbReference type="InterPro" id="IPR008927">
    <property type="entry name" value="6-PGluconate_DH-like_C_sf"/>
</dbReference>
<dbReference type="InterPro" id="IPR013328">
    <property type="entry name" value="6PGD_dom2"/>
</dbReference>
<dbReference type="InterPro" id="IPR006168">
    <property type="entry name" value="G3P_DH_NAD-dep"/>
</dbReference>
<dbReference type="InterPro" id="IPR006109">
    <property type="entry name" value="G3P_DH_NAD-dep_C"/>
</dbReference>
<dbReference type="InterPro" id="IPR011128">
    <property type="entry name" value="G3P_DH_NAD-dep_N"/>
</dbReference>
<dbReference type="InterPro" id="IPR036291">
    <property type="entry name" value="NAD(P)-bd_dom_sf"/>
</dbReference>
<dbReference type="NCBIfam" id="NF000940">
    <property type="entry name" value="PRK00094.1-2"/>
    <property type="match status" value="1"/>
</dbReference>
<dbReference type="NCBIfam" id="NF000942">
    <property type="entry name" value="PRK00094.1-4"/>
    <property type="match status" value="1"/>
</dbReference>
<dbReference type="PANTHER" id="PTHR11728">
    <property type="entry name" value="GLYCEROL-3-PHOSPHATE DEHYDROGENASE"/>
    <property type="match status" value="1"/>
</dbReference>
<dbReference type="PANTHER" id="PTHR11728:SF1">
    <property type="entry name" value="GLYCEROL-3-PHOSPHATE DEHYDROGENASE [NAD(+)] 2, CHLOROPLASTIC"/>
    <property type="match status" value="1"/>
</dbReference>
<dbReference type="Pfam" id="PF07479">
    <property type="entry name" value="NAD_Gly3P_dh_C"/>
    <property type="match status" value="1"/>
</dbReference>
<dbReference type="Pfam" id="PF01210">
    <property type="entry name" value="NAD_Gly3P_dh_N"/>
    <property type="match status" value="1"/>
</dbReference>
<dbReference type="PIRSF" id="PIRSF000114">
    <property type="entry name" value="Glycerol-3-P_dh"/>
    <property type="match status" value="1"/>
</dbReference>
<dbReference type="PRINTS" id="PR00077">
    <property type="entry name" value="GPDHDRGNASE"/>
</dbReference>
<dbReference type="SUPFAM" id="SSF48179">
    <property type="entry name" value="6-phosphogluconate dehydrogenase C-terminal domain-like"/>
    <property type="match status" value="1"/>
</dbReference>
<dbReference type="SUPFAM" id="SSF51735">
    <property type="entry name" value="NAD(P)-binding Rossmann-fold domains"/>
    <property type="match status" value="1"/>
</dbReference>
<dbReference type="PROSITE" id="PS00957">
    <property type="entry name" value="NAD_G3PDH"/>
    <property type="match status" value="1"/>
</dbReference>
<proteinExistence type="inferred from homology"/>
<name>GPDA_FRATT</name>